<comment type="function">
    <text evidence="1">Catalyzes the NADPH-dependent reduction of 7-cyano-7-deazaguanine (preQ0) to 7-aminomethyl-7-deazaguanine (preQ1).</text>
</comment>
<comment type="catalytic activity">
    <reaction evidence="1">
        <text>7-aminomethyl-7-carbaguanine + 2 NADP(+) = 7-cyano-7-deazaguanine + 2 NADPH + 3 H(+)</text>
        <dbReference type="Rhea" id="RHEA:13409"/>
        <dbReference type="ChEBI" id="CHEBI:15378"/>
        <dbReference type="ChEBI" id="CHEBI:45075"/>
        <dbReference type="ChEBI" id="CHEBI:57783"/>
        <dbReference type="ChEBI" id="CHEBI:58349"/>
        <dbReference type="ChEBI" id="CHEBI:58703"/>
        <dbReference type="EC" id="1.7.1.13"/>
    </reaction>
</comment>
<comment type="pathway">
    <text evidence="1">tRNA modification; tRNA-queuosine biosynthesis.</text>
</comment>
<comment type="subunit">
    <text evidence="1">Homodimer.</text>
</comment>
<comment type="subcellular location">
    <subcellularLocation>
        <location evidence="1">Cytoplasm</location>
    </subcellularLocation>
</comment>
<comment type="similarity">
    <text evidence="1">Belongs to the GTP cyclohydrolase I family. QueF type 2 subfamily.</text>
</comment>
<feature type="chain" id="PRO_1000062343" description="NADPH-dependent 7-cyano-7-deazaguanine reductase">
    <location>
        <begin position="1"/>
        <end position="279"/>
    </location>
</feature>
<feature type="active site" description="Thioimide intermediate" evidence="1">
    <location>
        <position position="187"/>
    </location>
</feature>
<feature type="active site" description="Proton donor" evidence="1">
    <location>
        <position position="194"/>
    </location>
</feature>
<feature type="binding site" evidence="1">
    <location>
        <begin position="86"/>
        <end position="88"/>
    </location>
    <ligand>
        <name>substrate</name>
    </ligand>
</feature>
<feature type="binding site" evidence="1">
    <location>
        <begin position="88"/>
        <end position="89"/>
    </location>
    <ligand>
        <name>NADPH</name>
        <dbReference type="ChEBI" id="CHEBI:57783"/>
    </ligand>
</feature>
<feature type="binding site" evidence="1">
    <location>
        <begin position="226"/>
        <end position="227"/>
    </location>
    <ligand>
        <name>substrate</name>
    </ligand>
</feature>
<feature type="binding site" evidence="1">
    <location>
        <begin position="255"/>
        <end position="256"/>
    </location>
    <ligand>
        <name>NADPH</name>
        <dbReference type="ChEBI" id="CHEBI:57783"/>
    </ligand>
</feature>
<keyword id="KW-0963">Cytoplasm</keyword>
<keyword id="KW-0521">NADP</keyword>
<keyword id="KW-0560">Oxidoreductase</keyword>
<keyword id="KW-0671">Queuosine biosynthesis</keyword>
<name>QUEF_HAEIE</name>
<sequence>MNYQDNSLKSLKLGQKTEYASQYDRTLLQPVPRALNRDGLGITQNQPFTIGADIWTAYEISWLNEKGLPQVAIADIYLDYQSQNLIESKSFKLYLNSFNQSKFADFNAVQQTMQRDLIECAQGDVKVRLNPVAVYDAQKIEHLQGDCIDEQDIEITSYEFNADWLKDCVSDEIVEEKLVSHLLKSNCLITNQPDWGTLHIHYVGKKINQEKLLRYVVSFRQHNEFHEQCVERIFCDLMHYAKPEKLTVYARYTRRGGLDINPFRSNFENLPENLRLARQ</sequence>
<proteinExistence type="inferred from homology"/>
<protein>
    <recommendedName>
        <fullName evidence="1">NADPH-dependent 7-cyano-7-deazaguanine reductase</fullName>
        <ecNumber evidence="1">1.7.1.13</ecNumber>
    </recommendedName>
    <alternativeName>
        <fullName evidence="1">7-cyano-7-carbaguanine reductase</fullName>
    </alternativeName>
    <alternativeName>
        <fullName evidence="1">NADPH-dependent nitrile oxidoreductase</fullName>
    </alternativeName>
    <alternativeName>
        <fullName evidence="1">PreQ(0) reductase</fullName>
    </alternativeName>
</protein>
<dbReference type="EC" id="1.7.1.13" evidence="1"/>
<dbReference type="EMBL" id="CP000671">
    <property type="protein sequence ID" value="ABQ98245.1"/>
    <property type="molecule type" value="Genomic_DNA"/>
</dbReference>
<dbReference type="SMR" id="A5UBU4"/>
<dbReference type="KEGG" id="hip:CGSHiEE_04200"/>
<dbReference type="HOGENOM" id="CLU_054738_0_0_6"/>
<dbReference type="UniPathway" id="UPA00392"/>
<dbReference type="GO" id="GO:0005737">
    <property type="term" value="C:cytoplasm"/>
    <property type="evidence" value="ECO:0007669"/>
    <property type="project" value="UniProtKB-SubCell"/>
</dbReference>
<dbReference type="GO" id="GO:0033739">
    <property type="term" value="F:preQ1 synthase activity"/>
    <property type="evidence" value="ECO:0007669"/>
    <property type="project" value="UniProtKB-UniRule"/>
</dbReference>
<dbReference type="GO" id="GO:0008616">
    <property type="term" value="P:queuosine biosynthetic process"/>
    <property type="evidence" value="ECO:0007669"/>
    <property type="project" value="UniProtKB-UniRule"/>
</dbReference>
<dbReference type="GO" id="GO:0006400">
    <property type="term" value="P:tRNA modification"/>
    <property type="evidence" value="ECO:0007669"/>
    <property type="project" value="UniProtKB-UniRule"/>
</dbReference>
<dbReference type="Gene3D" id="3.30.1130.10">
    <property type="match status" value="2"/>
</dbReference>
<dbReference type="HAMAP" id="MF_00817">
    <property type="entry name" value="QueF_type2"/>
    <property type="match status" value="1"/>
</dbReference>
<dbReference type="InterPro" id="IPR043133">
    <property type="entry name" value="GTP-CH-I_C/QueF"/>
</dbReference>
<dbReference type="InterPro" id="IPR050084">
    <property type="entry name" value="NADPH_dep_7-cyano-7-deazaG_red"/>
</dbReference>
<dbReference type="InterPro" id="IPR029500">
    <property type="entry name" value="QueF"/>
</dbReference>
<dbReference type="InterPro" id="IPR029139">
    <property type="entry name" value="QueF_N"/>
</dbReference>
<dbReference type="InterPro" id="IPR016428">
    <property type="entry name" value="QueF_type2"/>
</dbReference>
<dbReference type="NCBIfam" id="TIGR03138">
    <property type="entry name" value="QueF"/>
    <property type="match status" value="1"/>
</dbReference>
<dbReference type="PANTHER" id="PTHR34354">
    <property type="entry name" value="NADPH-DEPENDENT 7-CYANO-7-DEAZAGUANINE REDUCTASE"/>
    <property type="match status" value="1"/>
</dbReference>
<dbReference type="PANTHER" id="PTHR34354:SF1">
    <property type="entry name" value="NADPH-DEPENDENT 7-CYANO-7-DEAZAGUANINE REDUCTASE"/>
    <property type="match status" value="1"/>
</dbReference>
<dbReference type="Pfam" id="PF14489">
    <property type="entry name" value="QueF"/>
    <property type="match status" value="1"/>
</dbReference>
<dbReference type="Pfam" id="PF14819">
    <property type="entry name" value="QueF_N"/>
    <property type="match status" value="1"/>
</dbReference>
<dbReference type="PIRSF" id="PIRSF004750">
    <property type="entry name" value="Nitrile_oxidored_YqcD_prd"/>
    <property type="match status" value="1"/>
</dbReference>
<dbReference type="SUPFAM" id="SSF55620">
    <property type="entry name" value="Tetrahydrobiopterin biosynthesis enzymes-like"/>
    <property type="match status" value="1"/>
</dbReference>
<accession>A5UBU4</accession>
<organism>
    <name type="scientific">Haemophilus influenzae (strain PittEE)</name>
    <dbReference type="NCBI Taxonomy" id="374930"/>
    <lineage>
        <taxon>Bacteria</taxon>
        <taxon>Pseudomonadati</taxon>
        <taxon>Pseudomonadota</taxon>
        <taxon>Gammaproteobacteria</taxon>
        <taxon>Pasteurellales</taxon>
        <taxon>Pasteurellaceae</taxon>
        <taxon>Haemophilus</taxon>
    </lineage>
</organism>
<reference key="1">
    <citation type="journal article" date="2007" name="Genome Biol.">
        <title>Characterization and modeling of the Haemophilus influenzae core and supragenomes based on the complete genomic sequences of Rd and 12 clinical nontypeable strains.</title>
        <authorList>
            <person name="Hogg J.S."/>
            <person name="Hu F.Z."/>
            <person name="Janto B."/>
            <person name="Boissy R."/>
            <person name="Hayes J."/>
            <person name="Keefe R."/>
            <person name="Post J.C."/>
            <person name="Ehrlich G.D."/>
        </authorList>
    </citation>
    <scope>NUCLEOTIDE SEQUENCE [LARGE SCALE GENOMIC DNA]</scope>
    <source>
        <strain>PittEE</strain>
    </source>
</reference>
<evidence type="ECO:0000255" key="1">
    <source>
        <dbReference type="HAMAP-Rule" id="MF_00817"/>
    </source>
</evidence>
<gene>
    <name evidence="1" type="primary">queF</name>
    <name type="ordered locus">CGSHiEE_04200</name>
</gene>